<accession>Q4QQU1</accession>
<sequence length="636" mass="71869">MAAAPPLSKAEYLKRYLSGTDAGLEGGPESGRKRRKKRPKPGGAGGKGMRIVDDDVGWAAISTDKLEKEEEEDGDLPVVAEFVDERPEEVKQMEAFRSSTKWKLLGGYSEDGHFHNDDQDPSPPRKARHDTPDASPPRRVRHGTPEPSPPRRVRHDTPDPSPPRRVRHDSPDPSPTRRGHDSPDPSPTRRVHHDSPDPSPPRRVRHDTPDPSPPRRVRHDTPDPSPPRRVRHDSDASPPRRSHRNSSAVSPKRGHHGSSGTSSPRQAHNHSPAAAQHRRTLDSSGAQHHRRARHDSPDLELPKAKSSKAAERPSSKTVSQSGLGPPHPSLSMNSKYEHDSDLSPPRKRQAKAHFGAKKQLDSKGVCQKASDSDLSPPRKNSKSGHQDSDSDLSPPRNRPRRQSSDSDLSPPRRRQRTKSSDSDLSPSRRSPRSGKKTPHMYSGAKTGLVADVQREHQELKKQDQDATDLGAQFEFTETVFRDKSGRKRNLKLERLEQRRKAEKDSERDELYAQWGKGLAQSRQQQQNVEDAMKEMQKPLARYIDDEDLDRMLREQEREGDPMANFIKKNKAKENKNKKVRPRYNGPAPPPNRFNIWPGYRWDGVDRSNGFEQKRFARLASKKAVEELAYKWSVEDM</sequence>
<feature type="chain" id="PRO_0000287690" description="BUD13 homolog">
    <location>
        <begin position="1"/>
        <end position="636"/>
    </location>
</feature>
<feature type="region of interest" description="Disordered" evidence="4">
    <location>
        <begin position="18"/>
        <end position="55"/>
    </location>
</feature>
<feature type="region of interest" description="Disordered" evidence="4">
    <location>
        <begin position="64"/>
        <end position="83"/>
    </location>
</feature>
<feature type="region of interest" description="Disordered" evidence="4">
    <location>
        <begin position="106"/>
        <end position="469"/>
    </location>
</feature>
<feature type="region of interest" description="Disordered" evidence="4">
    <location>
        <begin position="554"/>
        <end position="597"/>
    </location>
</feature>
<feature type="coiled-coil region" evidence="3">
    <location>
        <begin position="448"/>
        <end position="537"/>
    </location>
</feature>
<feature type="compositionally biased region" description="Basic and acidic residues" evidence="4">
    <location>
        <begin position="294"/>
        <end position="314"/>
    </location>
</feature>
<feature type="compositionally biased region" description="Basic residues" evidence="4">
    <location>
        <begin position="345"/>
        <end position="356"/>
    </location>
</feature>
<feature type="compositionally biased region" description="Basic residues" evidence="4">
    <location>
        <begin position="429"/>
        <end position="438"/>
    </location>
</feature>
<feature type="compositionally biased region" description="Basic and acidic residues" evidence="4">
    <location>
        <begin position="452"/>
        <end position="464"/>
    </location>
</feature>
<feature type="modified residue" description="Phosphothreonine" evidence="6">
    <location>
        <position position="131"/>
    </location>
</feature>
<feature type="modified residue" description="Phosphoserine" evidence="6">
    <location>
        <position position="135"/>
    </location>
</feature>
<feature type="modified residue" description="Phosphothreonine" evidence="6">
    <location>
        <position position="144"/>
    </location>
</feature>
<feature type="modified residue" description="Phosphoserine" evidence="6">
    <location>
        <position position="148"/>
    </location>
</feature>
<feature type="modified residue" description="Phosphothreonine" evidence="6">
    <location>
        <position position="157"/>
    </location>
</feature>
<feature type="modified residue" description="Phosphoserine" evidence="6">
    <location>
        <position position="161"/>
    </location>
</feature>
<feature type="modified residue" description="Phosphoserine" evidence="2">
    <location>
        <position position="174"/>
    </location>
</feature>
<feature type="modified residue" description="Phosphoserine" evidence="6">
    <location>
        <position position="182"/>
    </location>
</feature>
<feature type="modified residue" description="Phosphoserine" evidence="6">
    <location>
        <position position="186"/>
    </location>
</feature>
<feature type="modified residue" description="Phosphothreonine" evidence="6">
    <location>
        <position position="208"/>
    </location>
</feature>
<feature type="modified residue" description="Phosphoserine" evidence="6">
    <location>
        <position position="212"/>
    </location>
</feature>
<feature type="modified residue" description="Phosphothreonine" evidence="6">
    <location>
        <position position="221"/>
    </location>
</feature>
<feature type="modified residue" description="Phosphoserine" evidence="6">
    <location>
        <position position="225"/>
    </location>
</feature>
<feature type="modified residue" description="Phosphoserine" evidence="2">
    <location>
        <position position="234"/>
    </location>
</feature>
<feature type="modified residue" description="Phosphoserine" evidence="2">
    <location>
        <position position="237"/>
    </location>
</feature>
<feature type="modified residue" description="Phosphoserine" evidence="2">
    <location>
        <position position="258"/>
    </location>
</feature>
<feature type="modified residue" description="Phosphoserine" evidence="2">
    <location>
        <position position="259"/>
    </location>
</feature>
<feature type="modified residue" description="Phosphoserine" evidence="2">
    <location>
        <position position="263"/>
    </location>
</feature>
<feature type="modified residue" description="Phosphoserine" evidence="2">
    <location>
        <position position="271"/>
    </location>
</feature>
<feature type="modified residue" description="Phosphoserine" evidence="2">
    <location>
        <position position="283"/>
    </location>
</feature>
<feature type="modified residue" description="Phosphoserine" evidence="2">
    <location>
        <position position="284"/>
    </location>
</feature>
<feature type="modified residue" description="Phosphoserine" evidence="6">
    <location>
        <position position="296"/>
    </location>
</feature>
<feature type="modified residue" description="Phosphoserine" evidence="1">
    <location>
        <position position="340"/>
    </location>
</feature>
<feature type="modified residue" description="Phosphoserine" evidence="6">
    <location>
        <position position="343"/>
    </location>
</feature>
<feature type="modified residue" description="Phosphoserine" evidence="1">
    <location>
        <position position="370"/>
    </location>
</feature>
<feature type="modified residue" description="Phosphoserine" evidence="2">
    <location>
        <position position="372"/>
    </location>
</feature>
<feature type="modified residue" description="Phosphoserine" evidence="1">
    <location>
        <position position="375"/>
    </location>
</feature>
<feature type="modified residue" description="Phosphoserine" evidence="2">
    <location>
        <position position="409"/>
    </location>
</feature>
<feature type="modified residue" description="Phosphoserine" evidence="2">
    <location>
        <position position="425"/>
    </location>
</feature>
<feature type="modified residue" description="Phosphotyrosine" evidence="2">
    <location>
        <position position="511"/>
    </location>
</feature>
<feature type="cross-link" description="Glycyl lysine isopeptide (Lys-Gly) (interchain with G-Cter in SUMO2)" evidence="2">
    <location>
        <position position="65"/>
    </location>
</feature>
<name>BUD13_RAT</name>
<keyword id="KW-0175">Coiled coil</keyword>
<keyword id="KW-1017">Isopeptide bond</keyword>
<keyword id="KW-0507">mRNA processing</keyword>
<keyword id="KW-0508">mRNA splicing</keyword>
<keyword id="KW-0539">Nucleus</keyword>
<keyword id="KW-0597">Phosphoprotein</keyword>
<keyword id="KW-1185">Reference proteome</keyword>
<keyword id="KW-0747">Spliceosome</keyword>
<keyword id="KW-0832">Ubl conjugation</keyword>
<protein>
    <recommendedName>
        <fullName>BUD13 homolog</fullName>
    </recommendedName>
</protein>
<gene>
    <name type="primary">Bud13</name>
</gene>
<comment type="function">
    <text evidence="2">Involved in pre-mRNA splicing as component of the activated spliceosome. As a component of the minor spliceosome, involved in the splicing of U12-type introns in pre-mRNAs (By similarity).</text>
</comment>
<comment type="subunit">
    <text evidence="2">Part of the activated spliceosome B/catalytic step 1 spliceosome, one of the forms of the spliceosome which has a well-formed active site but still cannot catalyze the branching reaction and is composed of at least 52 proteins, the U2, U5 and U6 snRNAs and the pre-mRNA. Component of the minor spliceosome, which splices U12-type introns (By similarity).</text>
</comment>
<comment type="subcellular location">
    <subcellularLocation>
        <location evidence="2">Nucleus</location>
    </subcellularLocation>
</comment>
<comment type="similarity">
    <text evidence="5">Belongs to the CWC26 family.</text>
</comment>
<proteinExistence type="evidence at protein level"/>
<dbReference type="EMBL" id="BC097995">
    <property type="protein sequence ID" value="AAH97995.1"/>
    <property type="molecule type" value="mRNA"/>
</dbReference>
<dbReference type="RefSeq" id="NP_001020448.1">
    <property type="nucleotide sequence ID" value="NM_001025277.1"/>
</dbReference>
<dbReference type="SMR" id="Q4QQU1"/>
<dbReference type="FunCoup" id="Q4QQU1">
    <property type="interactions" value="3919"/>
</dbReference>
<dbReference type="STRING" id="10116.ENSRNOP00000025232"/>
<dbReference type="iPTMnet" id="Q4QQU1"/>
<dbReference type="PhosphoSitePlus" id="Q4QQU1"/>
<dbReference type="PaxDb" id="10116-ENSRNOP00000025232"/>
<dbReference type="GeneID" id="300687"/>
<dbReference type="KEGG" id="rno:300687"/>
<dbReference type="UCSC" id="RGD:1308076">
    <property type="organism name" value="rat"/>
</dbReference>
<dbReference type="AGR" id="RGD:1308076"/>
<dbReference type="CTD" id="84811"/>
<dbReference type="RGD" id="1308076">
    <property type="gene designation" value="Bud13"/>
</dbReference>
<dbReference type="eggNOG" id="KOG2654">
    <property type="taxonomic scope" value="Eukaryota"/>
</dbReference>
<dbReference type="InParanoid" id="Q4QQU1"/>
<dbReference type="OrthoDB" id="86737at9989"/>
<dbReference type="PhylomeDB" id="Q4QQU1"/>
<dbReference type="Reactome" id="R-RNO-72163">
    <property type="pathway name" value="mRNA Splicing - Major Pathway"/>
</dbReference>
<dbReference type="PRO" id="PR:Q4QQU1"/>
<dbReference type="Proteomes" id="UP000002494">
    <property type="component" value="Unplaced"/>
</dbReference>
<dbReference type="GO" id="GO:0005634">
    <property type="term" value="C:nucleus"/>
    <property type="evidence" value="ECO:0000250"/>
    <property type="project" value="UniProtKB"/>
</dbReference>
<dbReference type="GO" id="GO:0071005">
    <property type="term" value="C:U2-type precatalytic spliceosome"/>
    <property type="evidence" value="ECO:0000250"/>
    <property type="project" value="UniProtKB"/>
</dbReference>
<dbReference type="GO" id="GO:0005684">
    <property type="term" value="C:U2-type spliceosomal complex"/>
    <property type="evidence" value="ECO:0000318"/>
    <property type="project" value="GO_Central"/>
</dbReference>
<dbReference type="GO" id="GO:0000398">
    <property type="term" value="P:mRNA splicing, via spliceosome"/>
    <property type="evidence" value="ECO:0000250"/>
    <property type="project" value="UniProtKB"/>
</dbReference>
<dbReference type="InterPro" id="IPR018609">
    <property type="entry name" value="Bud13"/>
</dbReference>
<dbReference type="InterPro" id="IPR051112">
    <property type="entry name" value="CWC26_splicing_factor"/>
</dbReference>
<dbReference type="PANTHER" id="PTHR31809">
    <property type="entry name" value="BUD13 HOMOLOG"/>
    <property type="match status" value="1"/>
</dbReference>
<dbReference type="PANTHER" id="PTHR31809:SF0">
    <property type="entry name" value="BUD13 HOMOLOG"/>
    <property type="match status" value="1"/>
</dbReference>
<dbReference type="Pfam" id="PF09736">
    <property type="entry name" value="Bud13"/>
    <property type="match status" value="1"/>
</dbReference>
<evidence type="ECO:0000250" key="1">
    <source>
        <dbReference type="UniProtKB" id="Q8R149"/>
    </source>
</evidence>
<evidence type="ECO:0000250" key="2">
    <source>
        <dbReference type="UniProtKB" id="Q9BRD0"/>
    </source>
</evidence>
<evidence type="ECO:0000255" key="3"/>
<evidence type="ECO:0000256" key="4">
    <source>
        <dbReference type="SAM" id="MobiDB-lite"/>
    </source>
</evidence>
<evidence type="ECO:0000305" key="5"/>
<evidence type="ECO:0007744" key="6">
    <source>
    </source>
</evidence>
<reference key="1">
    <citation type="journal article" date="2004" name="Genome Res.">
        <title>The status, quality, and expansion of the NIH full-length cDNA project: the Mammalian Gene Collection (MGC).</title>
        <authorList>
            <consortium name="The MGC Project Team"/>
        </authorList>
    </citation>
    <scope>NUCLEOTIDE SEQUENCE [LARGE SCALE MRNA]</scope>
    <source>
        <tissue>Placenta</tissue>
    </source>
</reference>
<reference key="2">
    <citation type="journal article" date="2012" name="Nat. Commun.">
        <title>Quantitative maps of protein phosphorylation sites across 14 different rat organs and tissues.</title>
        <authorList>
            <person name="Lundby A."/>
            <person name="Secher A."/>
            <person name="Lage K."/>
            <person name="Nordsborg N.B."/>
            <person name="Dmytriyev A."/>
            <person name="Lundby C."/>
            <person name="Olsen J.V."/>
        </authorList>
    </citation>
    <scope>PHOSPHORYLATION [LARGE SCALE ANALYSIS] AT THR-131; SER-135; THR-144; SER-148; THR-157; SER-161; SER-182; SER-186; THR-208; SER-212; THR-221; SER-225; SER-296 AND SER-343</scope>
    <scope>IDENTIFICATION BY MASS SPECTROMETRY [LARGE SCALE ANALYSIS]</scope>
</reference>
<organism>
    <name type="scientific">Rattus norvegicus</name>
    <name type="common">Rat</name>
    <dbReference type="NCBI Taxonomy" id="10116"/>
    <lineage>
        <taxon>Eukaryota</taxon>
        <taxon>Metazoa</taxon>
        <taxon>Chordata</taxon>
        <taxon>Craniata</taxon>
        <taxon>Vertebrata</taxon>
        <taxon>Euteleostomi</taxon>
        <taxon>Mammalia</taxon>
        <taxon>Eutheria</taxon>
        <taxon>Euarchontoglires</taxon>
        <taxon>Glires</taxon>
        <taxon>Rodentia</taxon>
        <taxon>Myomorpha</taxon>
        <taxon>Muroidea</taxon>
        <taxon>Muridae</taxon>
        <taxon>Murinae</taxon>
        <taxon>Rattus</taxon>
    </lineage>
</organism>